<sequence>MDHKNYLNHVIRGIYNDFQFLVDEGVVERSALDWVHANIHLQDGPASPVTAPAAQPVESSVPLPLPKRKSSVEKRAGSVASAVAAMSLSQNSGEKRTPEEPRKLPGVPAPQKQSEASSVNSSTEKLPPPPSYPGPNTAHKNVERVLAMYDFPGPDAGDLGFHAGEVIIVLEHVNNDWWRGELNGKEGIFPSNYVRLLEDSAVKAQPPPPPPQQNYPPAASSSAPPMQYQQTAYPPQQAPYPPVQAYPQAPQQPIVVAQPTEHKHSSTFKKIGSGLGSAFVFGAGATAGADLVNSIF</sequence>
<keyword id="KW-1185">Reference proteome</keyword>
<keyword id="KW-0728">SH3 domain</keyword>
<reference key="1">
    <citation type="submission" date="1998-03" db="EMBL/GenBank/DDBJ databases">
        <title>S.pombe SH3 domain containing protein.</title>
        <authorList>
            <person name="Kawamukai M."/>
        </authorList>
    </citation>
    <scope>NUCLEOTIDE SEQUENCE [MRNA]</scope>
</reference>
<reference key="2">
    <citation type="journal article" date="2002" name="Nature">
        <title>The genome sequence of Schizosaccharomyces pombe.</title>
        <authorList>
            <person name="Wood V."/>
            <person name="Gwilliam R."/>
            <person name="Rajandream M.A."/>
            <person name="Lyne M.H."/>
            <person name="Lyne R."/>
            <person name="Stewart A."/>
            <person name="Sgouros J.G."/>
            <person name="Peat N."/>
            <person name="Hayles J."/>
            <person name="Baker S.G."/>
            <person name="Basham D."/>
            <person name="Bowman S."/>
            <person name="Brooks K."/>
            <person name="Brown D."/>
            <person name="Brown S."/>
            <person name="Chillingworth T."/>
            <person name="Churcher C.M."/>
            <person name="Collins M."/>
            <person name="Connor R."/>
            <person name="Cronin A."/>
            <person name="Davis P."/>
            <person name="Feltwell T."/>
            <person name="Fraser A."/>
            <person name="Gentles S."/>
            <person name="Goble A."/>
            <person name="Hamlin N."/>
            <person name="Harris D.E."/>
            <person name="Hidalgo J."/>
            <person name="Hodgson G."/>
            <person name="Holroyd S."/>
            <person name="Hornsby T."/>
            <person name="Howarth S."/>
            <person name="Huckle E.J."/>
            <person name="Hunt S."/>
            <person name="Jagels K."/>
            <person name="James K.D."/>
            <person name="Jones L."/>
            <person name="Jones M."/>
            <person name="Leather S."/>
            <person name="McDonald S."/>
            <person name="McLean J."/>
            <person name="Mooney P."/>
            <person name="Moule S."/>
            <person name="Mungall K.L."/>
            <person name="Murphy L.D."/>
            <person name="Niblett D."/>
            <person name="Odell C."/>
            <person name="Oliver K."/>
            <person name="O'Neil S."/>
            <person name="Pearson D."/>
            <person name="Quail M.A."/>
            <person name="Rabbinowitsch E."/>
            <person name="Rutherford K.M."/>
            <person name="Rutter S."/>
            <person name="Saunders D."/>
            <person name="Seeger K."/>
            <person name="Sharp S."/>
            <person name="Skelton J."/>
            <person name="Simmonds M.N."/>
            <person name="Squares R."/>
            <person name="Squares S."/>
            <person name="Stevens K."/>
            <person name="Taylor K."/>
            <person name="Taylor R.G."/>
            <person name="Tivey A."/>
            <person name="Walsh S.V."/>
            <person name="Warren T."/>
            <person name="Whitehead S."/>
            <person name="Woodward J.R."/>
            <person name="Volckaert G."/>
            <person name="Aert R."/>
            <person name="Robben J."/>
            <person name="Grymonprez B."/>
            <person name="Weltjens I."/>
            <person name="Vanstreels E."/>
            <person name="Rieger M."/>
            <person name="Schaefer M."/>
            <person name="Mueller-Auer S."/>
            <person name="Gabel C."/>
            <person name="Fuchs M."/>
            <person name="Duesterhoeft A."/>
            <person name="Fritzc C."/>
            <person name="Holzer E."/>
            <person name="Moestl D."/>
            <person name="Hilbert H."/>
            <person name="Borzym K."/>
            <person name="Langer I."/>
            <person name="Beck A."/>
            <person name="Lehrach H."/>
            <person name="Reinhardt R."/>
            <person name="Pohl T.M."/>
            <person name="Eger P."/>
            <person name="Zimmermann W."/>
            <person name="Wedler H."/>
            <person name="Wambutt R."/>
            <person name="Purnelle B."/>
            <person name="Goffeau A."/>
            <person name="Cadieu E."/>
            <person name="Dreano S."/>
            <person name="Gloux S."/>
            <person name="Lelaure V."/>
            <person name="Mottier S."/>
            <person name="Galibert F."/>
            <person name="Aves S.J."/>
            <person name="Xiang Z."/>
            <person name="Hunt C."/>
            <person name="Moore K."/>
            <person name="Hurst S.M."/>
            <person name="Lucas M."/>
            <person name="Rochet M."/>
            <person name="Gaillardin C."/>
            <person name="Tallada V.A."/>
            <person name="Garzon A."/>
            <person name="Thode G."/>
            <person name="Daga R.R."/>
            <person name="Cruzado L."/>
            <person name="Jimenez J."/>
            <person name="Sanchez M."/>
            <person name="del Rey F."/>
            <person name="Benito J."/>
            <person name="Dominguez A."/>
            <person name="Revuelta J.L."/>
            <person name="Moreno S."/>
            <person name="Armstrong J."/>
            <person name="Forsburg S.L."/>
            <person name="Cerutti L."/>
            <person name="Lowe T."/>
            <person name="McCombie W.R."/>
            <person name="Paulsen I."/>
            <person name="Potashkin J."/>
            <person name="Shpakovski G.V."/>
            <person name="Ussery D."/>
            <person name="Barrell B.G."/>
            <person name="Nurse P."/>
        </authorList>
    </citation>
    <scope>NUCLEOTIDE SEQUENCE [LARGE SCALE GENOMIC DNA]</scope>
    <source>
        <strain>972 / ATCC 24843</strain>
    </source>
</reference>
<dbReference type="EMBL" id="AB011825">
    <property type="protein sequence ID" value="BAA25107.1"/>
    <property type="molecule type" value="mRNA"/>
</dbReference>
<dbReference type="EMBL" id="CU329671">
    <property type="protein sequence ID" value="CAA17920.1"/>
    <property type="molecule type" value="Genomic_DNA"/>
</dbReference>
<dbReference type="PIR" id="T43336">
    <property type="entry name" value="T43336"/>
</dbReference>
<dbReference type="SMR" id="O43125"/>
<dbReference type="BioGRID" id="276489">
    <property type="interactions" value="6"/>
</dbReference>
<dbReference type="FunCoup" id="O43125">
    <property type="interactions" value="80"/>
</dbReference>
<dbReference type="IntAct" id="O43125">
    <property type="interactions" value="1"/>
</dbReference>
<dbReference type="STRING" id="284812.O43125"/>
<dbReference type="iPTMnet" id="O43125"/>
<dbReference type="PaxDb" id="4896-SPBC119.05c.1"/>
<dbReference type="EnsemblFungi" id="SPBC119.05c.1">
    <property type="protein sequence ID" value="SPBC119.05c.1:pep"/>
    <property type="gene ID" value="SPBC119.05c"/>
</dbReference>
<dbReference type="KEGG" id="spo:2539945"/>
<dbReference type="PomBase" id="SPBC119.05c"/>
<dbReference type="VEuPathDB" id="FungiDB:SPBC119.05c"/>
<dbReference type="eggNOG" id="KOG3601">
    <property type="taxonomic scope" value="Eukaryota"/>
</dbReference>
<dbReference type="HOGENOM" id="CLU_940602_0_0_1"/>
<dbReference type="InParanoid" id="O43125"/>
<dbReference type="OMA" id="AMLPNRI"/>
<dbReference type="PhylomeDB" id="O43125"/>
<dbReference type="Reactome" id="R-SPO-5689901">
    <property type="pathway name" value="Metalloprotease DUBs"/>
</dbReference>
<dbReference type="Reactome" id="R-SPO-9013420">
    <property type="pathway name" value="RHOU GTPase cycle"/>
</dbReference>
<dbReference type="PRO" id="PR:O43125"/>
<dbReference type="Proteomes" id="UP000002485">
    <property type="component" value="Chromosome II"/>
</dbReference>
<dbReference type="GO" id="GO:0005938">
    <property type="term" value="C:cell cortex"/>
    <property type="evidence" value="ECO:0000314"/>
    <property type="project" value="UniProtKB"/>
</dbReference>
<dbReference type="GO" id="GO:0005737">
    <property type="term" value="C:cytoplasm"/>
    <property type="evidence" value="ECO:0000314"/>
    <property type="project" value="UniProtKB"/>
</dbReference>
<dbReference type="GO" id="GO:0005829">
    <property type="term" value="C:cytosol"/>
    <property type="evidence" value="ECO:0000314"/>
    <property type="project" value="PomBase"/>
</dbReference>
<dbReference type="GO" id="GO:0030036">
    <property type="term" value="P:actin cytoskeleton organization"/>
    <property type="evidence" value="ECO:0000266"/>
    <property type="project" value="PomBase"/>
</dbReference>
<dbReference type="GO" id="GO:0006897">
    <property type="term" value="P:endocytosis"/>
    <property type="evidence" value="ECO:0000316"/>
    <property type="project" value="UniProtKB"/>
</dbReference>
<dbReference type="CDD" id="cd00174">
    <property type="entry name" value="SH3"/>
    <property type="match status" value="1"/>
</dbReference>
<dbReference type="FunFam" id="2.30.30.40:FF:000072">
    <property type="entry name" value="Unconventional Myosin IB"/>
    <property type="match status" value="1"/>
</dbReference>
<dbReference type="Gene3D" id="2.30.30.40">
    <property type="entry name" value="SH3 Domains"/>
    <property type="match status" value="1"/>
</dbReference>
<dbReference type="InterPro" id="IPR036028">
    <property type="entry name" value="SH3-like_dom_sf"/>
</dbReference>
<dbReference type="InterPro" id="IPR001452">
    <property type="entry name" value="SH3_domain"/>
</dbReference>
<dbReference type="InterPro" id="IPR050670">
    <property type="entry name" value="STAM"/>
</dbReference>
<dbReference type="PANTHER" id="PTHR45929">
    <property type="entry name" value="JAK PATHWAY SIGNAL TRANSDUCTION ADAPTOR MOLECULE"/>
    <property type="match status" value="1"/>
</dbReference>
<dbReference type="PANTHER" id="PTHR45929:SF7">
    <property type="entry name" value="LAS SEVENTEEN-BINDING PROTEIN 1"/>
    <property type="match status" value="1"/>
</dbReference>
<dbReference type="Pfam" id="PF00018">
    <property type="entry name" value="SH3_1"/>
    <property type="match status" value="1"/>
</dbReference>
<dbReference type="PRINTS" id="PR00452">
    <property type="entry name" value="SH3DOMAIN"/>
</dbReference>
<dbReference type="PRINTS" id="PR01887">
    <property type="entry name" value="SPECTRNALPHA"/>
</dbReference>
<dbReference type="SMART" id="SM00326">
    <property type="entry name" value="SH3"/>
    <property type="match status" value="1"/>
</dbReference>
<dbReference type="SUPFAM" id="SSF50044">
    <property type="entry name" value="SH3-domain"/>
    <property type="match status" value="1"/>
</dbReference>
<dbReference type="PROSITE" id="PS50002">
    <property type="entry name" value="SH3"/>
    <property type="match status" value="1"/>
</dbReference>
<accession>O43125</accession>
<feature type="chain" id="PRO_0000079396" description="Protein csh3">
    <location>
        <begin position="1"/>
        <end position="296"/>
    </location>
</feature>
<feature type="domain" description="SH3" evidence="1">
    <location>
        <begin position="140"/>
        <end position="199"/>
    </location>
</feature>
<feature type="region of interest" description="Disordered" evidence="2">
    <location>
        <begin position="46"/>
        <end position="138"/>
    </location>
</feature>
<feature type="region of interest" description="Disordered" evidence="2">
    <location>
        <begin position="202"/>
        <end position="246"/>
    </location>
</feature>
<feature type="compositionally biased region" description="Basic and acidic residues" evidence="2">
    <location>
        <begin position="93"/>
        <end position="103"/>
    </location>
</feature>
<feature type="compositionally biased region" description="Polar residues" evidence="2">
    <location>
        <begin position="111"/>
        <end position="124"/>
    </location>
</feature>
<feature type="compositionally biased region" description="Pro residues" evidence="2">
    <location>
        <begin position="205"/>
        <end position="214"/>
    </location>
</feature>
<feature type="compositionally biased region" description="Low complexity" evidence="2">
    <location>
        <begin position="215"/>
        <end position="235"/>
    </location>
</feature>
<evidence type="ECO:0000255" key="1">
    <source>
        <dbReference type="PROSITE-ProRule" id="PRU00192"/>
    </source>
</evidence>
<evidence type="ECO:0000256" key="2">
    <source>
        <dbReference type="SAM" id="MobiDB-lite"/>
    </source>
</evidence>
<name>CSH3_SCHPO</name>
<organism>
    <name type="scientific">Schizosaccharomyces pombe (strain 972 / ATCC 24843)</name>
    <name type="common">Fission yeast</name>
    <dbReference type="NCBI Taxonomy" id="284812"/>
    <lineage>
        <taxon>Eukaryota</taxon>
        <taxon>Fungi</taxon>
        <taxon>Dikarya</taxon>
        <taxon>Ascomycota</taxon>
        <taxon>Taphrinomycotina</taxon>
        <taxon>Schizosaccharomycetes</taxon>
        <taxon>Schizosaccharomycetales</taxon>
        <taxon>Schizosaccharomycetaceae</taxon>
        <taxon>Schizosaccharomyces</taxon>
    </lineage>
</organism>
<proteinExistence type="evidence at transcript level"/>
<gene>
    <name type="primary">csh3</name>
    <name type="ORF">SPBC119.05c</name>
</gene>
<protein>
    <recommendedName>
        <fullName>Protein csh3</fullName>
    </recommendedName>
</protein>